<evidence type="ECO:0000255" key="1">
    <source>
        <dbReference type="HAMAP-Rule" id="MF_01014"/>
    </source>
</evidence>
<keyword id="KW-0028">Amino-acid biosynthesis</keyword>
<keyword id="KW-0963">Cytoplasm</keyword>
<keyword id="KW-0368">Histidine biosynthesis</keyword>
<keyword id="KW-0413">Isomerase</keyword>
<protein>
    <recommendedName>
        <fullName evidence="1">1-(5-phosphoribosyl)-5-[(5-phosphoribosylamino)methylideneamino] imidazole-4-carboxamide isomerase</fullName>
        <ecNumber evidence="1">5.3.1.16</ecNumber>
    </recommendedName>
    <alternativeName>
        <fullName evidence="1">Phosphoribosylformimino-5-aminoimidazole carboxamide ribotide isomerase</fullName>
    </alternativeName>
</protein>
<dbReference type="EC" id="5.3.1.16" evidence="1"/>
<dbReference type="EMBL" id="CP000088">
    <property type="protein sequence ID" value="AAZ55193.1"/>
    <property type="molecule type" value="Genomic_DNA"/>
</dbReference>
<dbReference type="SMR" id="Q47QS4"/>
<dbReference type="STRING" id="269800.Tfu_1155"/>
<dbReference type="KEGG" id="tfu:Tfu_1155"/>
<dbReference type="eggNOG" id="COG0106">
    <property type="taxonomic scope" value="Bacteria"/>
</dbReference>
<dbReference type="HOGENOM" id="CLU_048577_1_1_11"/>
<dbReference type="OrthoDB" id="9807749at2"/>
<dbReference type="UniPathway" id="UPA00031">
    <property type="reaction ID" value="UER00009"/>
</dbReference>
<dbReference type="GO" id="GO:0005737">
    <property type="term" value="C:cytoplasm"/>
    <property type="evidence" value="ECO:0007669"/>
    <property type="project" value="UniProtKB-SubCell"/>
</dbReference>
<dbReference type="GO" id="GO:0003949">
    <property type="term" value="F:1-(5-phosphoribosyl)-5-[(5-phosphoribosylamino)methylideneamino]imidazole-4-carboxamide isomerase activity"/>
    <property type="evidence" value="ECO:0007669"/>
    <property type="project" value="UniProtKB-UniRule"/>
</dbReference>
<dbReference type="GO" id="GO:0004640">
    <property type="term" value="F:phosphoribosylanthranilate isomerase activity"/>
    <property type="evidence" value="ECO:0007669"/>
    <property type="project" value="InterPro"/>
</dbReference>
<dbReference type="GO" id="GO:0000105">
    <property type="term" value="P:L-histidine biosynthetic process"/>
    <property type="evidence" value="ECO:0007669"/>
    <property type="project" value="UniProtKB-UniRule"/>
</dbReference>
<dbReference type="GO" id="GO:0000162">
    <property type="term" value="P:L-tryptophan biosynthetic process"/>
    <property type="evidence" value="ECO:0007669"/>
    <property type="project" value="InterPro"/>
</dbReference>
<dbReference type="CDD" id="cd04732">
    <property type="entry name" value="HisA"/>
    <property type="match status" value="1"/>
</dbReference>
<dbReference type="FunFam" id="3.20.20.70:FF:000009">
    <property type="entry name" value="1-(5-phosphoribosyl)-5-[(5-phosphoribosylamino)methylideneamino] imidazole-4-carboxamide isomerase"/>
    <property type="match status" value="1"/>
</dbReference>
<dbReference type="Gene3D" id="3.20.20.70">
    <property type="entry name" value="Aldolase class I"/>
    <property type="match status" value="1"/>
</dbReference>
<dbReference type="HAMAP" id="MF_01014">
    <property type="entry name" value="HisA"/>
    <property type="match status" value="1"/>
</dbReference>
<dbReference type="InterPro" id="IPR013785">
    <property type="entry name" value="Aldolase_TIM"/>
</dbReference>
<dbReference type="InterPro" id="IPR006062">
    <property type="entry name" value="His_biosynth"/>
</dbReference>
<dbReference type="InterPro" id="IPR010188">
    <property type="entry name" value="HisA/PriA_Actinobacteria"/>
</dbReference>
<dbReference type="InterPro" id="IPR044524">
    <property type="entry name" value="Isoase_HisA-like"/>
</dbReference>
<dbReference type="InterPro" id="IPR023016">
    <property type="entry name" value="Isoase_HisA-like_bact"/>
</dbReference>
<dbReference type="InterPro" id="IPR011060">
    <property type="entry name" value="RibuloseP-bd_barrel"/>
</dbReference>
<dbReference type="NCBIfam" id="TIGR01919">
    <property type="entry name" value="hisA-trpF"/>
    <property type="match status" value="1"/>
</dbReference>
<dbReference type="PANTHER" id="PTHR43090">
    <property type="entry name" value="1-(5-PHOSPHORIBOSYL)-5-[(5-PHOSPHORIBOSYLAMINO)METHYLIDENEAMINO] IMIDAZOLE-4-CARBOXAMIDE ISOMERASE"/>
    <property type="match status" value="1"/>
</dbReference>
<dbReference type="PANTHER" id="PTHR43090:SF2">
    <property type="entry name" value="1-(5-PHOSPHORIBOSYL)-5-[(5-PHOSPHORIBOSYLAMINO)METHYLIDENEAMINO] IMIDAZOLE-4-CARBOXAMIDE ISOMERASE"/>
    <property type="match status" value="1"/>
</dbReference>
<dbReference type="Pfam" id="PF00977">
    <property type="entry name" value="His_biosynth"/>
    <property type="match status" value="1"/>
</dbReference>
<dbReference type="SUPFAM" id="SSF51366">
    <property type="entry name" value="Ribulose-phoshate binding barrel"/>
    <property type="match status" value="1"/>
</dbReference>
<proteinExistence type="inferred from homology"/>
<reference key="1">
    <citation type="journal article" date="2007" name="J. Bacteriol.">
        <title>Genome sequence and analysis of the soil cellulolytic actinomycete Thermobifida fusca YX.</title>
        <authorList>
            <person name="Lykidis A."/>
            <person name="Mavromatis K."/>
            <person name="Ivanova N."/>
            <person name="Anderson I."/>
            <person name="Land M."/>
            <person name="DiBartolo G."/>
            <person name="Martinez M."/>
            <person name="Lapidus A."/>
            <person name="Lucas S."/>
            <person name="Copeland A."/>
            <person name="Richardson P."/>
            <person name="Wilson D.B."/>
            <person name="Kyrpides N."/>
        </authorList>
    </citation>
    <scope>NUCLEOTIDE SEQUENCE [LARGE SCALE GENOMIC DNA]</scope>
    <source>
        <strain>YX</strain>
    </source>
</reference>
<comment type="catalytic activity">
    <reaction evidence="1">
        <text>1-(5-phospho-beta-D-ribosyl)-5-[(5-phospho-beta-D-ribosylamino)methylideneamino]imidazole-4-carboxamide = 5-[(5-phospho-1-deoxy-D-ribulos-1-ylimino)methylamino]-1-(5-phospho-beta-D-ribosyl)imidazole-4-carboxamide</text>
        <dbReference type="Rhea" id="RHEA:15469"/>
        <dbReference type="ChEBI" id="CHEBI:58435"/>
        <dbReference type="ChEBI" id="CHEBI:58525"/>
        <dbReference type="EC" id="5.3.1.16"/>
    </reaction>
</comment>
<comment type="pathway">
    <text evidence="1">Amino-acid biosynthesis; L-histidine biosynthesis; L-histidine from 5-phospho-alpha-D-ribose 1-diphosphate: step 4/9.</text>
</comment>
<comment type="subcellular location">
    <subcellularLocation>
        <location evidence="1">Cytoplasm</location>
    </subcellularLocation>
</comment>
<comment type="similarity">
    <text evidence="1">Belongs to the HisA/HisF family.</text>
</comment>
<name>HIS4_THEFY</name>
<organism>
    <name type="scientific">Thermobifida fusca (strain YX)</name>
    <dbReference type="NCBI Taxonomy" id="269800"/>
    <lineage>
        <taxon>Bacteria</taxon>
        <taxon>Bacillati</taxon>
        <taxon>Actinomycetota</taxon>
        <taxon>Actinomycetes</taxon>
        <taxon>Streptosporangiales</taxon>
        <taxon>Nocardiopsidaceae</taxon>
        <taxon>Thermobifida</taxon>
    </lineage>
</organism>
<accession>Q47QS4</accession>
<sequence>MAPILELLPAVDVAGGQAVQLVQGKDGTGGRYGDPLNAALTWQNAGAEWIHLVDLDAAFGRGHNRELLASIVGKLDIKVELSGGIRDDESLNAALATGCHRVNIGTAALENPDWCAKVIAEHGDRVAIGLDVRGTTLAARGWTRDGGDLYETLERLEAAGCARYIVTDVNKDGTLKGPNLDLLRDVCSRTDKPVVASGGISSLDDLRALAALVPEGVEGAIMGTALYEGAFTLEEALATVREVAQ</sequence>
<gene>
    <name evidence="1" type="primary">hisA</name>
    <name type="ordered locus">Tfu_1155</name>
</gene>
<feature type="chain" id="PRO_0000229088" description="1-(5-phosphoribosyl)-5-[(5-phosphoribosylamino)methylideneamino] imidazole-4-carboxamide isomerase">
    <location>
        <begin position="1"/>
        <end position="245"/>
    </location>
</feature>
<feature type="active site" description="Proton acceptor" evidence="1">
    <location>
        <position position="12"/>
    </location>
</feature>
<feature type="active site" description="Proton donor" evidence="1">
    <location>
        <position position="131"/>
    </location>
</feature>